<proteinExistence type="inferred from homology"/>
<name>SYP_CORU7</name>
<reference key="1">
    <citation type="journal article" date="2008" name="J. Biotechnol.">
        <title>The lifestyle of Corynebacterium urealyticum derived from its complete genome sequence established by pyrosequencing.</title>
        <authorList>
            <person name="Tauch A."/>
            <person name="Trost E."/>
            <person name="Tilker A."/>
            <person name="Ludewig U."/>
            <person name="Schneiker S."/>
            <person name="Goesmann A."/>
            <person name="Arnold W."/>
            <person name="Bekel T."/>
            <person name="Brinkrolf K."/>
            <person name="Brune I."/>
            <person name="Goetker S."/>
            <person name="Kalinowski J."/>
            <person name="Kamp P.-B."/>
            <person name="Lobo F.P."/>
            <person name="Viehoever P."/>
            <person name="Weisshaar B."/>
            <person name="Soriano F."/>
            <person name="Droege M."/>
            <person name="Puehler A."/>
        </authorList>
    </citation>
    <scope>NUCLEOTIDE SEQUENCE [LARGE SCALE GENOMIC DNA]</scope>
    <source>
        <strain>ATCC 43042 / DSM 7109</strain>
    </source>
</reference>
<protein>
    <recommendedName>
        <fullName evidence="1">Proline--tRNA ligase</fullName>
        <ecNumber evidence="1">6.1.1.15</ecNumber>
    </recommendedName>
    <alternativeName>
        <fullName evidence="1">Prolyl-tRNA synthetase</fullName>
        <shortName evidence="1">ProRS</shortName>
    </alternativeName>
</protein>
<gene>
    <name evidence="1" type="primary">proS</name>
    <name type="ordered locus">cu0845</name>
</gene>
<evidence type="ECO:0000255" key="1">
    <source>
        <dbReference type="HAMAP-Rule" id="MF_01569"/>
    </source>
</evidence>
<accession>B1VGB6</accession>
<comment type="function">
    <text evidence="1">Catalyzes the attachment of proline to tRNA(Pro) in a two-step reaction: proline is first activated by ATP to form Pro-AMP and then transferred to the acceptor end of tRNA(Pro). As ProRS can inadvertently accommodate and process non-cognate amino acids such as alanine and cysteine, to avoid such errors it has two additional distinct editing activities against alanine. One activity is designated as 'pretransfer' editing and involves the tRNA(Pro)-independent hydrolysis of activated Ala-AMP. The other activity is designated 'posttransfer' editing and involves deacylation of mischarged Ala-tRNA(Pro). The misacylated Cys-tRNA(Pro) is not edited by ProRS.</text>
</comment>
<comment type="catalytic activity">
    <reaction evidence="1">
        <text>tRNA(Pro) + L-proline + ATP = L-prolyl-tRNA(Pro) + AMP + diphosphate</text>
        <dbReference type="Rhea" id="RHEA:14305"/>
        <dbReference type="Rhea" id="RHEA-COMP:9700"/>
        <dbReference type="Rhea" id="RHEA-COMP:9702"/>
        <dbReference type="ChEBI" id="CHEBI:30616"/>
        <dbReference type="ChEBI" id="CHEBI:33019"/>
        <dbReference type="ChEBI" id="CHEBI:60039"/>
        <dbReference type="ChEBI" id="CHEBI:78442"/>
        <dbReference type="ChEBI" id="CHEBI:78532"/>
        <dbReference type="ChEBI" id="CHEBI:456215"/>
        <dbReference type="EC" id="6.1.1.15"/>
    </reaction>
</comment>
<comment type="subunit">
    <text evidence="1">Homodimer.</text>
</comment>
<comment type="subcellular location">
    <subcellularLocation>
        <location evidence="1">Cytoplasm</location>
    </subcellularLocation>
</comment>
<comment type="domain">
    <text evidence="1">Consists of three domains: the N-terminal catalytic domain, the editing domain and the C-terminal anticodon-binding domain.</text>
</comment>
<comment type="similarity">
    <text evidence="1">Belongs to the class-II aminoacyl-tRNA synthetase family. ProS type 1 subfamily.</text>
</comment>
<dbReference type="EC" id="6.1.1.15" evidence="1"/>
<dbReference type="EMBL" id="AM942444">
    <property type="protein sequence ID" value="CAQ04805.1"/>
    <property type="molecule type" value="Genomic_DNA"/>
</dbReference>
<dbReference type="RefSeq" id="WP_012360094.1">
    <property type="nucleotide sequence ID" value="NC_010545.1"/>
</dbReference>
<dbReference type="SMR" id="B1VGB6"/>
<dbReference type="STRING" id="504474.cu0845"/>
<dbReference type="GeneID" id="60603622"/>
<dbReference type="KEGG" id="cur:cu0845"/>
<dbReference type="eggNOG" id="COG0442">
    <property type="taxonomic scope" value="Bacteria"/>
</dbReference>
<dbReference type="HOGENOM" id="CLU_016739_0_0_11"/>
<dbReference type="Proteomes" id="UP000001727">
    <property type="component" value="Chromosome"/>
</dbReference>
<dbReference type="GO" id="GO:0005829">
    <property type="term" value="C:cytosol"/>
    <property type="evidence" value="ECO:0007669"/>
    <property type="project" value="TreeGrafter"/>
</dbReference>
<dbReference type="GO" id="GO:0002161">
    <property type="term" value="F:aminoacyl-tRNA deacylase activity"/>
    <property type="evidence" value="ECO:0007669"/>
    <property type="project" value="InterPro"/>
</dbReference>
<dbReference type="GO" id="GO:0005524">
    <property type="term" value="F:ATP binding"/>
    <property type="evidence" value="ECO:0007669"/>
    <property type="project" value="UniProtKB-UniRule"/>
</dbReference>
<dbReference type="GO" id="GO:0004827">
    <property type="term" value="F:proline-tRNA ligase activity"/>
    <property type="evidence" value="ECO:0007669"/>
    <property type="project" value="UniProtKB-UniRule"/>
</dbReference>
<dbReference type="GO" id="GO:0006433">
    <property type="term" value="P:prolyl-tRNA aminoacylation"/>
    <property type="evidence" value="ECO:0007669"/>
    <property type="project" value="UniProtKB-UniRule"/>
</dbReference>
<dbReference type="CDD" id="cd00861">
    <property type="entry name" value="ProRS_anticodon_short"/>
    <property type="match status" value="1"/>
</dbReference>
<dbReference type="CDD" id="cd00779">
    <property type="entry name" value="ProRS_core_prok"/>
    <property type="match status" value="1"/>
</dbReference>
<dbReference type="FunFam" id="3.30.930.10:FF:000065">
    <property type="entry name" value="Proline--tRNA ligase"/>
    <property type="match status" value="1"/>
</dbReference>
<dbReference type="FunFam" id="3.30.930.10:FF:000066">
    <property type="entry name" value="Proline--tRNA ligase"/>
    <property type="match status" value="1"/>
</dbReference>
<dbReference type="Gene3D" id="3.40.50.800">
    <property type="entry name" value="Anticodon-binding domain"/>
    <property type="match status" value="1"/>
</dbReference>
<dbReference type="Gene3D" id="3.30.930.10">
    <property type="entry name" value="Bira Bifunctional Protein, Domain 2"/>
    <property type="match status" value="2"/>
</dbReference>
<dbReference type="HAMAP" id="MF_01569">
    <property type="entry name" value="Pro_tRNA_synth_type1"/>
    <property type="match status" value="1"/>
</dbReference>
<dbReference type="InterPro" id="IPR002314">
    <property type="entry name" value="aa-tRNA-synt_IIb"/>
</dbReference>
<dbReference type="InterPro" id="IPR006195">
    <property type="entry name" value="aa-tRNA-synth_II"/>
</dbReference>
<dbReference type="InterPro" id="IPR045864">
    <property type="entry name" value="aa-tRNA-synth_II/BPL/LPL"/>
</dbReference>
<dbReference type="InterPro" id="IPR004154">
    <property type="entry name" value="Anticodon-bd"/>
</dbReference>
<dbReference type="InterPro" id="IPR036621">
    <property type="entry name" value="Anticodon-bd_dom_sf"/>
</dbReference>
<dbReference type="InterPro" id="IPR002316">
    <property type="entry name" value="Pro-tRNA-ligase_IIa"/>
</dbReference>
<dbReference type="InterPro" id="IPR004500">
    <property type="entry name" value="Pro-tRNA-synth_IIa_bac-type"/>
</dbReference>
<dbReference type="InterPro" id="IPR023717">
    <property type="entry name" value="Pro-tRNA-Synthase_IIa_type1"/>
</dbReference>
<dbReference type="InterPro" id="IPR050062">
    <property type="entry name" value="Pro-tRNA_synthetase"/>
</dbReference>
<dbReference type="InterPro" id="IPR044140">
    <property type="entry name" value="ProRS_anticodon_short"/>
</dbReference>
<dbReference type="InterPro" id="IPR033730">
    <property type="entry name" value="ProRS_core_prok"/>
</dbReference>
<dbReference type="InterPro" id="IPR036754">
    <property type="entry name" value="YbaK/aa-tRNA-synt-asso_dom_sf"/>
</dbReference>
<dbReference type="InterPro" id="IPR007214">
    <property type="entry name" value="YbaK/aa-tRNA-synth-assoc-dom"/>
</dbReference>
<dbReference type="NCBIfam" id="NF006625">
    <property type="entry name" value="PRK09194.1"/>
    <property type="match status" value="1"/>
</dbReference>
<dbReference type="NCBIfam" id="TIGR00409">
    <property type="entry name" value="proS_fam_II"/>
    <property type="match status" value="1"/>
</dbReference>
<dbReference type="PANTHER" id="PTHR42753">
    <property type="entry name" value="MITOCHONDRIAL RIBOSOME PROTEIN L39/PROLYL-TRNA LIGASE FAMILY MEMBER"/>
    <property type="match status" value="1"/>
</dbReference>
<dbReference type="PANTHER" id="PTHR42753:SF2">
    <property type="entry name" value="PROLINE--TRNA LIGASE"/>
    <property type="match status" value="1"/>
</dbReference>
<dbReference type="Pfam" id="PF03129">
    <property type="entry name" value="HGTP_anticodon"/>
    <property type="match status" value="1"/>
</dbReference>
<dbReference type="Pfam" id="PF00587">
    <property type="entry name" value="tRNA-synt_2b"/>
    <property type="match status" value="1"/>
</dbReference>
<dbReference type="Pfam" id="PF04073">
    <property type="entry name" value="tRNA_edit"/>
    <property type="match status" value="1"/>
</dbReference>
<dbReference type="PRINTS" id="PR01046">
    <property type="entry name" value="TRNASYNTHPRO"/>
</dbReference>
<dbReference type="SUPFAM" id="SSF52954">
    <property type="entry name" value="Class II aaRS ABD-related"/>
    <property type="match status" value="1"/>
</dbReference>
<dbReference type="SUPFAM" id="SSF55681">
    <property type="entry name" value="Class II aaRS and biotin synthetases"/>
    <property type="match status" value="1"/>
</dbReference>
<dbReference type="SUPFAM" id="SSF55826">
    <property type="entry name" value="YbaK/ProRS associated domain"/>
    <property type="match status" value="1"/>
</dbReference>
<dbReference type="PROSITE" id="PS50862">
    <property type="entry name" value="AA_TRNA_LIGASE_II"/>
    <property type="match status" value="1"/>
</dbReference>
<feature type="chain" id="PRO_1000199368" description="Proline--tRNA ligase">
    <location>
        <begin position="1"/>
        <end position="592"/>
    </location>
</feature>
<organism>
    <name type="scientific">Corynebacterium urealyticum (strain ATCC 43042 / DSM 7109)</name>
    <dbReference type="NCBI Taxonomy" id="504474"/>
    <lineage>
        <taxon>Bacteria</taxon>
        <taxon>Bacillati</taxon>
        <taxon>Actinomycetota</taxon>
        <taxon>Actinomycetes</taxon>
        <taxon>Mycobacteriales</taxon>
        <taxon>Corynebacteriaceae</taxon>
        <taxon>Corynebacterium</taxon>
    </lineage>
</organism>
<sequence>MITRMSSLFLHTLRDDPADAELASHKLLVRAGYIRRVAPGVYSWLPMGLRVLRKVENVVRREMDAIGGQELMFPALLPKEPYEVTRRWDEYGPELFRLKDRKEADYLLGPTHEELFTWLVKGELNSYKDFPKVLYQIQTKYRDEARPRAGILRGREFVMKDSYSFNMTDEGLDESYRLHRKAYQRIFDALGIEYVICYATSGAMGGSASEEFLAVAADGEDTFVRSTESDYAANVEAVVSIPPAEESVEDKPEAVSHESPGADTIETLVEWANEAGLTVDGAPVTAKDTLKCIVCKVTRPGEDEDGNPYAPELTGVLVPGDREVDMKRLEASLEPAVVELADDEDFKKYPFLVKGFVGPRTFADNDLRMLADPRVVKGTAWITGADEKDRHYSNLVAGRDFTPDGYVEAAEVREGDPSPDGKGVLTLSRGIEIGHIFQLGRKYTEAFDVQILDENGRRTVPTMGSYGIGVSRLLAVVAEQMHDEKGLRWPRSIAPYDVHVVIANKDEAAGEAARELAEALSDAGLEVLFDDRPKVSPGVKFKDSELLGMPQVVVVGRGFAEGKVELRDRLNDERSEIDYADAVDVITKAARA</sequence>
<keyword id="KW-0030">Aminoacyl-tRNA synthetase</keyword>
<keyword id="KW-0067">ATP-binding</keyword>
<keyword id="KW-0963">Cytoplasm</keyword>
<keyword id="KW-0436">Ligase</keyword>
<keyword id="KW-0547">Nucleotide-binding</keyword>
<keyword id="KW-0648">Protein biosynthesis</keyword>
<keyword id="KW-1185">Reference proteome</keyword>